<keyword id="KW-0143">Chaperone</keyword>
<keyword id="KW-0963">Cytoplasm</keyword>
<keyword id="KW-0235">DNA replication</keyword>
<keyword id="KW-0479">Metal-binding</keyword>
<keyword id="KW-1185">Reference proteome</keyword>
<keyword id="KW-0677">Repeat</keyword>
<keyword id="KW-0346">Stress response</keyword>
<keyword id="KW-0862">Zinc</keyword>
<keyword id="KW-0863">Zinc-finger</keyword>
<name>DNAJ_CLOD6</name>
<dbReference type="EMBL" id="AM180355">
    <property type="protein sequence ID" value="CAJ69347.1"/>
    <property type="molecule type" value="Genomic_DNA"/>
</dbReference>
<dbReference type="RefSeq" id="WP_004454751.1">
    <property type="nucleotide sequence ID" value="NZ_JAUPES010000003.1"/>
</dbReference>
<dbReference type="RefSeq" id="YP_001088974.1">
    <property type="nucleotide sequence ID" value="NC_009089.1"/>
</dbReference>
<dbReference type="SMR" id="Q182E7"/>
<dbReference type="STRING" id="272563.CD630_24600"/>
<dbReference type="EnsemblBacteria" id="CAJ69347">
    <property type="protein sequence ID" value="CAJ69347"/>
    <property type="gene ID" value="CD630_24600"/>
</dbReference>
<dbReference type="GeneID" id="66354858"/>
<dbReference type="KEGG" id="cdf:CD630_24600"/>
<dbReference type="KEGG" id="pdc:CDIF630_02706"/>
<dbReference type="PATRIC" id="fig|272563.120.peg.2599"/>
<dbReference type="eggNOG" id="COG0484">
    <property type="taxonomic scope" value="Bacteria"/>
</dbReference>
<dbReference type="OrthoDB" id="9779889at2"/>
<dbReference type="PhylomeDB" id="Q182E7"/>
<dbReference type="BioCyc" id="PDIF272563:G12WB-2615-MONOMER"/>
<dbReference type="Proteomes" id="UP000001978">
    <property type="component" value="Chromosome"/>
</dbReference>
<dbReference type="GO" id="GO:0005737">
    <property type="term" value="C:cytoplasm"/>
    <property type="evidence" value="ECO:0007669"/>
    <property type="project" value="UniProtKB-SubCell"/>
</dbReference>
<dbReference type="GO" id="GO:0005524">
    <property type="term" value="F:ATP binding"/>
    <property type="evidence" value="ECO:0007669"/>
    <property type="project" value="InterPro"/>
</dbReference>
<dbReference type="GO" id="GO:0031072">
    <property type="term" value="F:heat shock protein binding"/>
    <property type="evidence" value="ECO:0007669"/>
    <property type="project" value="InterPro"/>
</dbReference>
<dbReference type="GO" id="GO:0051082">
    <property type="term" value="F:unfolded protein binding"/>
    <property type="evidence" value="ECO:0007669"/>
    <property type="project" value="UniProtKB-UniRule"/>
</dbReference>
<dbReference type="GO" id="GO:0008270">
    <property type="term" value="F:zinc ion binding"/>
    <property type="evidence" value="ECO:0007669"/>
    <property type="project" value="UniProtKB-UniRule"/>
</dbReference>
<dbReference type="GO" id="GO:0051085">
    <property type="term" value="P:chaperone cofactor-dependent protein refolding"/>
    <property type="evidence" value="ECO:0007669"/>
    <property type="project" value="TreeGrafter"/>
</dbReference>
<dbReference type="GO" id="GO:0006260">
    <property type="term" value="P:DNA replication"/>
    <property type="evidence" value="ECO:0007669"/>
    <property type="project" value="UniProtKB-KW"/>
</dbReference>
<dbReference type="GO" id="GO:0042026">
    <property type="term" value="P:protein refolding"/>
    <property type="evidence" value="ECO:0007669"/>
    <property type="project" value="TreeGrafter"/>
</dbReference>
<dbReference type="GO" id="GO:0009408">
    <property type="term" value="P:response to heat"/>
    <property type="evidence" value="ECO:0007669"/>
    <property type="project" value="InterPro"/>
</dbReference>
<dbReference type="CDD" id="cd06257">
    <property type="entry name" value="DnaJ"/>
    <property type="match status" value="1"/>
</dbReference>
<dbReference type="CDD" id="cd10747">
    <property type="entry name" value="DnaJ_C"/>
    <property type="match status" value="1"/>
</dbReference>
<dbReference type="CDD" id="cd10719">
    <property type="entry name" value="DnaJ_zf"/>
    <property type="match status" value="1"/>
</dbReference>
<dbReference type="FunFam" id="1.10.287.110:FF:000034">
    <property type="entry name" value="Chaperone protein DnaJ"/>
    <property type="match status" value="1"/>
</dbReference>
<dbReference type="FunFam" id="2.10.230.10:FF:000002">
    <property type="entry name" value="Molecular chaperone DnaJ"/>
    <property type="match status" value="1"/>
</dbReference>
<dbReference type="FunFam" id="2.60.260.20:FF:000004">
    <property type="entry name" value="Molecular chaperone DnaJ"/>
    <property type="match status" value="1"/>
</dbReference>
<dbReference type="Gene3D" id="6.20.20.10">
    <property type="match status" value="2"/>
</dbReference>
<dbReference type="Gene3D" id="1.10.287.110">
    <property type="entry name" value="DnaJ domain"/>
    <property type="match status" value="1"/>
</dbReference>
<dbReference type="Gene3D" id="2.60.260.20">
    <property type="entry name" value="Urease metallochaperone UreE, N-terminal domain"/>
    <property type="match status" value="2"/>
</dbReference>
<dbReference type="HAMAP" id="MF_01152">
    <property type="entry name" value="DnaJ"/>
    <property type="match status" value="1"/>
</dbReference>
<dbReference type="InterPro" id="IPR012724">
    <property type="entry name" value="DnaJ"/>
</dbReference>
<dbReference type="InterPro" id="IPR002939">
    <property type="entry name" value="DnaJ_C"/>
</dbReference>
<dbReference type="InterPro" id="IPR001623">
    <property type="entry name" value="DnaJ_domain"/>
</dbReference>
<dbReference type="InterPro" id="IPR018253">
    <property type="entry name" value="DnaJ_domain_CS"/>
</dbReference>
<dbReference type="InterPro" id="IPR008971">
    <property type="entry name" value="HSP40/DnaJ_pept-bd"/>
</dbReference>
<dbReference type="InterPro" id="IPR001305">
    <property type="entry name" value="HSP_DnaJ_Cys-rich_dom"/>
</dbReference>
<dbReference type="InterPro" id="IPR036410">
    <property type="entry name" value="HSP_DnaJ_Cys-rich_dom_sf"/>
</dbReference>
<dbReference type="InterPro" id="IPR036869">
    <property type="entry name" value="J_dom_sf"/>
</dbReference>
<dbReference type="NCBIfam" id="TIGR02349">
    <property type="entry name" value="DnaJ_bact"/>
    <property type="match status" value="1"/>
</dbReference>
<dbReference type="NCBIfam" id="NF008035">
    <property type="entry name" value="PRK10767.1"/>
    <property type="match status" value="1"/>
</dbReference>
<dbReference type="PANTHER" id="PTHR43096:SF48">
    <property type="entry name" value="CHAPERONE PROTEIN DNAJ"/>
    <property type="match status" value="1"/>
</dbReference>
<dbReference type="PANTHER" id="PTHR43096">
    <property type="entry name" value="DNAJ HOMOLOG 1, MITOCHONDRIAL-RELATED"/>
    <property type="match status" value="1"/>
</dbReference>
<dbReference type="Pfam" id="PF00226">
    <property type="entry name" value="DnaJ"/>
    <property type="match status" value="1"/>
</dbReference>
<dbReference type="Pfam" id="PF01556">
    <property type="entry name" value="DnaJ_C"/>
    <property type="match status" value="1"/>
</dbReference>
<dbReference type="Pfam" id="PF00684">
    <property type="entry name" value="DnaJ_CXXCXGXG"/>
    <property type="match status" value="1"/>
</dbReference>
<dbReference type="PRINTS" id="PR00625">
    <property type="entry name" value="JDOMAIN"/>
</dbReference>
<dbReference type="SMART" id="SM00271">
    <property type="entry name" value="DnaJ"/>
    <property type="match status" value="1"/>
</dbReference>
<dbReference type="SUPFAM" id="SSF46565">
    <property type="entry name" value="Chaperone J-domain"/>
    <property type="match status" value="1"/>
</dbReference>
<dbReference type="SUPFAM" id="SSF57938">
    <property type="entry name" value="DnaJ/Hsp40 cysteine-rich domain"/>
    <property type="match status" value="1"/>
</dbReference>
<dbReference type="SUPFAM" id="SSF49493">
    <property type="entry name" value="HSP40/DnaJ peptide-binding domain"/>
    <property type="match status" value="2"/>
</dbReference>
<dbReference type="PROSITE" id="PS00636">
    <property type="entry name" value="DNAJ_1"/>
    <property type="match status" value="1"/>
</dbReference>
<dbReference type="PROSITE" id="PS50076">
    <property type="entry name" value="DNAJ_2"/>
    <property type="match status" value="1"/>
</dbReference>
<dbReference type="PROSITE" id="PS51188">
    <property type="entry name" value="ZF_CR"/>
    <property type="match status" value="1"/>
</dbReference>
<proteinExistence type="inferred from homology"/>
<protein>
    <recommendedName>
        <fullName evidence="1">Chaperone protein DnaJ</fullName>
    </recommendedName>
</protein>
<gene>
    <name evidence="1" type="primary">dnaJ</name>
    <name type="ordered locus">CD630_24600</name>
</gene>
<comment type="function">
    <text evidence="1">Participates actively in the response to hyperosmotic and heat shock by preventing the aggregation of stress-denatured proteins and by disaggregating proteins, also in an autonomous, DnaK-independent fashion. Unfolded proteins bind initially to DnaJ; upon interaction with the DnaJ-bound protein, DnaK hydrolyzes its bound ATP, resulting in the formation of a stable complex. GrpE releases ADP from DnaK; ATP binding to DnaK triggers the release of the substrate protein, thus completing the reaction cycle. Several rounds of ATP-dependent interactions between DnaJ, DnaK and GrpE are required for fully efficient folding. Also involved, together with DnaK and GrpE, in the DNA replication of plasmids through activation of initiation proteins.</text>
</comment>
<comment type="cofactor">
    <cofactor evidence="1">
        <name>Zn(2+)</name>
        <dbReference type="ChEBI" id="CHEBI:29105"/>
    </cofactor>
    <text evidence="1">Binds 2 Zn(2+) ions per monomer.</text>
</comment>
<comment type="subunit">
    <text evidence="1">Homodimer.</text>
</comment>
<comment type="subcellular location">
    <subcellularLocation>
        <location evidence="1">Cytoplasm</location>
    </subcellularLocation>
</comment>
<comment type="domain">
    <text evidence="1">The J domain is necessary and sufficient to stimulate DnaK ATPase activity. Zinc center 1 plays an important role in the autonomous, DnaK-independent chaperone activity of DnaJ. Zinc center 2 is essential for interaction with DnaK and for DnaJ activity.</text>
</comment>
<comment type="similarity">
    <text evidence="1">Belongs to the DnaJ family.</text>
</comment>
<sequence>MSTKRDYYEVLGISKGAEAQEIKKAYRKLAMKYHPDRNPGDKEAEEKFKEINEAYEVLSDDTKRKTYDQFGHDGLNGQGGFGGQGGFGGQGFGGFEDMFGDIFGDMFGGSFGGGRARRRGPQRGADIRQSVTISFEEAAFGKKMSIKVNRSEECEECNGTGAKPGTSKKTCSTCNGTGQVRTVQRTPFGNIASSRPCSACNGTGEVIESPCSKCHGTGNTRKVKTIEVDIPAGIDDGQMIKLSGQGEVGEKGAPRGDLYIVVNVKSHPLFTRDGNDIYFEMPITFVQATLGDEIEVPTLDGKVKYSVPEGTQTGTVFRLKEKGIPRIRGNSRGDQYVKVVVEIPKKLNDKQKELLREFAKECGSNVHEKKKTFGQKIEDMFKKK</sequence>
<organism>
    <name type="scientific">Clostridioides difficile (strain 630)</name>
    <name type="common">Peptoclostridium difficile</name>
    <dbReference type="NCBI Taxonomy" id="272563"/>
    <lineage>
        <taxon>Bacteria</taxon>
        <taxon>Bacillati</taxon>
        <taxon>Bacillota</taxon>
        <taxon>Clostridia</taxon>
        <taxon>Peptostreptococcales</taxon>
        <taxon>Peptostreptococcaceae</taxon>
        <taxon>Clostridioides</taxon>
    </lineage>
</organism>
<evidence type="ECO:0000255" key="1">
    <source>
        <dbReference type="HAMAP-Rule" id="MF_01152"/>
    </source>
</evidence>
<reference key="1">
    <citation type="journal article" date="2006" name="Nat. Genet.">
        <title>The multidrug-resistant human pathogen Clostridium difficile has a highly mobile, mosaic genome.</title>
        <authorList>
            <person name="Sebaihia M."/>
            <person name="Wren B.W."/>
            <person name="Mullany P."/>
            <person name="Fairweather N.F."/>
            <person name="Minton N."/>
            <person name="Stabler R."/>
            <person name="Thomson N.R."/>
            <person name="Roberts A.P."/>
            <person name="Cerdeno-Tarraga A.M."/>
            <person name="Wang H."/>
            <person name="Holden M.T.G."/>
            <person name="Wright A."/>
            <person name="Churcher C."/>
            <person name="Quail M.A."/>
            <person name="Baker S."/>
            <person name="Bason N."/>
            <person name="Brooks K."/>
            <person name="Chillingworth T."/>
            <person name="Cronin A."/>
            <person name="Davis P."/>
            <person name="Dowd L."/>
            <person name="Fraser A."/>
            <person name="Feltwell T."/>
            <person name="Hance Z."/>
            <person name="Holroyd S."/>
            <person name="Jagels K."/>
            <person name="Moule S."/>
            <person name="Mungall K."/>
            <person name="Price C."/>
            <person name="Rabbinowitsch E."/>
            <person name="Sharp S."/>
            <person name="Simmonds M."/>
            <person name="Stevens K."/>
            <person name="Unwin L."/>
            <person name="Whithead S."/>
            <person name="Dupuy B."/>
            <person name="Dougan G."/>
            <person name="Barrell B."/>
            <person name="Parkhill J."/>
        </authorList>
    </citation>
    <scope>NUCLEOTIDE SEQUENCE [LARGE SCALE GENOMIC DNA]</scope>
    <source>
        <strain>630</strain>
    </source>
</reference>
<feature type="chain" id="PRO_1000085177" description="Chaperone protein DnaJ">
    <location>
        <begin position="1"/>
        <end position="384"/>
    </location>
</feature>
<feature type="domain" description="J" evidence="1">
    <location>
        <begin position="6"/>
        <end position="71"/>
    </location>
</feature>
<feature type="repeat" description="CXXCXGXG motif">
    <location>
        <begin position="154"/>
        <end position="161"/>
    </location>
</feature>
<feature type="repeat" description="CXXCXGXG motif">
    <location>
        <begin position="171"/>
        <end position="178"/>
    </location>
</feature>
<feature type="repeat" description="CXXCXGXG motif">
    <location>
        <begin position="197"/>
        <end position="204"/>
    </location>
</feature>
<feature type="repeat" description="CXXCXGXG motif">
    <location>
        <begin position="211"/>
        <end position="218"/>
    </location>
</feature>
<feature type="zinc finger region" description="CR-type" evidence="1">
    <location>
        <begin position="141"/>
        <end position="223"/>
    </location>
</feature>
<feature type="binding site" evidence="1">
    <location>
        <position position="154"/>
    </location>
    <ligand>
        <name>Zn(2+)</name>
        <dbReference type="ChEBI" id="CHEBI:29105"/>
        <label>1</label>
    </ligand>
</feature>
<feature type="binding site" evidence="1">
    <location>
        <position position="157"/>
    </location>
    <ligand>
        <name>Zn(2+)</name>
        <dbReference type="ChEBI" id="CHEBI:29105"/>
        <label>1</label>
    </ligand>
</feature>
<feature type="binding site" evidence="1">
    <location>
        <position position="171"/>
    </location>
    <ligand>
        <name>Zn(2+)</name>
        <dbReference type="ChEBI" id="CHEBI:29105"/>
        <label>2</label>
    </ligand>
</feature>
<feature type="binding site" evidence="1">
    <location>
        <position position="174"/>
    </location>
    <ligand>
        <name>Zn(2+)</name>
        <dbReference type="ChEBI" id="CHEBI:29105"/>
        <label>2</label>
    </ligand>
</feature>
<feature type="binding site" evidence="1">
    <location>
        <position position="197"/>
    </location>
    <ligand>
        <name>Zn(2+)</name>
        <dbReference type="ChEBI" id="CHEBI:29105"/>
        <label>2</label>
    </ligand>
</feature>
<feature type="binding site" evidence="1">
    <location>
        <position position="200"/>
    </location>
    <ligand>
        <name>Zn(2+)</name>
        <dbReference type="ChEBI" id="CHEBI:29105"/>
        <label>2</label>
    </ligand>
</feature>
<feature type="binding site" evidence="1">
    <location>
        <position position="211"/>
    </location>
    <ligand>
        <name>Zn(2+)</name>
        <dbReference type="ChEBI" id="CHEBI:29105"/>
        <label>1</label>
    </ligand>
</feature>
<feature type="binding site" evidence="1">
    <location>
        <position position="214"/>
    </location>
    <ligand>
        <name>Zn(2+)</name>
        <dbReference type="ChEBI" id="CHEBI:29105"/>
        <label>1</label>
    </ligand>
</feature>
<accession>Q182E7</accession>